<name>DNAJ_CHLPN</name>
<gene>
    <name evidence="1" type="primary">dnaJ</name>
    <name type="ordered locus">CPn_0032</name>
    <name type="ordered locus">CP_0744</name>
    <name type="ordered locus">CpB0036</name>
</gene>
<accession>Q9Z9E9</accession>
<evidence type="ECO:0000255" key="1">
    <source>
        <dbReference type="HAMAP-Rule" id="MF_01152"/>
    </source>
</evidence>
<reference key="1">
    <citation type="journal article" date="1999" name="Nat. Genet.">
        <title>Comparative genomes of Chlamydia pneumoniae and C. trachomatis.</title>
        <authorList>
            <person name="Kalman S."/>
            <person name="Mitchell W.P."/>
            <person name="Marathe R."/>
            <person name="Lammel C.J."/>
            <person name="Fan J."/>
            <person name="Hyman R.W."/>
            <person name="Olinger L."/>
            <person name="Grimwood J."/>
            <person name="Davis R.W."/>
            <person name="Stephens R.S."/>
        </authorList>
    </citation>
    <scope>NUCLEOTIDE SEQUENCE [LARGE SCALE GENOMIC DNA]</scope>
    <source>
        <strain>CWL029</strain>
    </source>
</reference>
<reference key="2">
    <citation type="journal article" date="2000" name="Nucleic Acids Res.">
        <title>Genome sequences of Chlamydia trachomatis MoPn and Chlamydia pneumoniae AR39.</title>
        <authorList>
            <person name="Read T.D."/>
            <person name="Brunham R.C."/>
            <person name="Shen C."/>
            <person name="Gill S.R."/>
            <person name="Heidelberg J.F."/>
            <person name="White O."/>
            <person name="Hickey E.K."/>
            <person name="Peterson J.D."/>
            <person name="Utterback T.R."/>
            <person name="Berry K.J."/>
            <person name="Bass S."/>
            <person name="Linher K.D."/>
            <person name="Weidman J.F."/>
            <person name="Khouri H.M."/>
            <person name="Craven B."/>
            <person name="Bowman C."/>
            <person name="Dodson R.J."/>
            <person name="Gwinn M.L."/>
            <person name="Nelson W.C."/>
            <person name="DeBoy R.T."/>
            <person name="Kolonay J.F."/>
            <person name="McClarty G."/>
            <person name="Salzberg S.L."/>
            <person name="Eisen J.A."/>
            <person name="Fraser C.M."/>
        </authorList>
    </citation>
    <scope>NUCLEOTIDE SEQUENCE [LARGE SCALE GENOMIC DNA]</scope>
    <source>
        <strain>AR39</strain>
    </source>
</reference>
<reference key="3">
    <citation type="journal article" date="2000" name="Nucleic Acids Res.">
        <title>Comparison of whole genome sequences of Chlamydia pneumoniae J138 from Japan and CWL029 from USA.</title>
        <authorList>
            <person name="Shirai M."/>
            <person name="Hirakawa H."/>
            <person name="Kimoto M."/>
            <person name="Tabuchi M."/>
            <person name="Kishi F."/>
            <person name="Ouchi K."/>
            <person name="Shiba T."/>
            <person name="Ishii K."/>
            <person name="Hattori M."/>
            <person name="Kuhara S."/>
            <person name="Nakazawa T."/>
        </authorList>
    </citation>
    <scope>NUCLEOTIDE SEQUENCE [LARGE SCALE GENOMIC DNA]</scope>
    <source>
        <strain>J138</strain>
    </source>
</reference>
<reference key="4">
    <citation type="submission" date="2002-05" db="EMBL/GenBank/DDBJ databases">
        <title>The genome sequence of Chlamydia pneumoniae TW183 and comparison with other Chlamydia strains based on whole genome sequence analysis.</title>
        <authorList>
            <person name="Geng M.M."/>
            <person name="Schuhmacher A."/>
            <person name="Muehldorfer I."/>
            <person name="Bensch K.W."/>
            <person name="Schaefer K.P."/>
            <person name="Schneider S."/>
            <person name="Pohl T."/>
            <person name="Essig A."/>
            <person name="Marre R."/>
            <person name="Melchers K."/>
        </authorList>
    </citation>
    <scope>NUCLEOTIDE SEQUENCE [LARGE SCALE GENOMIC DNA]</scope>
    <source>
        <strain>TW-183</strain>
    </source>
</reference>
<keyword id="KW-0143">Chaperone</keyword>
<keyword id="KW-0963">Cytoplasm</keyword>
<keyword id="KW-0235">DNA replication</keyword>
<keyword id="KW-0479">Metal-binding</keyword>
<keyword id="KW-0677">Repeat</keyword>
<keyword id="KW-0346">Stress response</keyword>
<keyword id="KW-0862">Zinc</keyword>
<keyword id="KW-0863">Zinc-finger</keyword>
<protein>
    <recommendedName>
        <fullName evidence="1">Chaperone protein DnaJ</fullName>
    </recommendedName>
</protein>
<sequence>MDYYSILGISKTASAEEIKKAYRKLAVKYHPDKNPGDAAAEKRFKEVSEAYEVLSDPQKRDSYDRFGKDGPFAGAGGFGGAGGMGNMEDALRTFMGAFGGEFGGGSFFDGLFGGLGEAFGMRSDPAGARQGASKKVHINLTFEEAAHGVEKELVVSGYKSCETCSGQGAVNPQGIKSCERCKGSGQVVQSRGFFSMASTCPECGGEGRIITDPCSSCRGQGRVKDKRSVHVHIPAGVDSGMRLKMEGYGDAGQNGAPSGDLYVFIDVESHPVFERRGDDLILELPIGFVDAALGMKKEIPTLLKTEGSCRLTVPEGIQSGTILKVRNQGFPNVHGKGRGDLLVRISVETPQNLSEEQKELLRTFASTEKAENFPKKRSFLDKIKGFFSDFTV</sequence>
<comment type="function">
    <text evidence="1">Participates actively in the response to hyperosmotic and heat shock by preventing the aggregation of stress-denatured proteins and by disaggregating proteins, also in an autonomous, DnaK-independent fashion. Unfolded proteins bind initially to DnaJ; upon interaction with the DnaJ-bound protein, DnaK hydrolyzes its bound ATP, resulting in the formation of a stable complex. GrpE releases ADP from DnaK; ATP binding to DnaK triggers the release of the substrate protein, thus completing the reaction cycle. Several rounds of ATP-dependent interactions between DnaJ, DnaK and GrpE are required for fully efficient folding. Also involved, together with DnaK and GrpE, in the DNA replication of plasmids through activation of initiation proteins.</text>
</comment>
<comment type="cofactor">
    <cofactor evidence="1">
        <name>Zn(2+)</name>
        <dbReference type="ChEBI" id="CHEBI:29105"/>
    </cofactor>
    <text evidence="1">Binds 2 Zn(2+) ions per monomer.</text>
</comment>
<comment type="subunit">
    <text evidence="1">Homodimer.</text>
</comment>
<comment type="subcellular location">
    <subcellularLocation>
        <location evidence="1">Cytoplasm</location>
    </subcellularLocation>
</comment>
<comment type="domain">
    <text evidence="1">The J domain is necessary and sufficient to stimulate DnaK ATPase activity. Zinc center 1 plays an important role in the autonomous, DnaK-independent chaperone activity of DnaJ. Zinc center 2 is essential for interaction with DnaK and for DnaJ activity.</text>
</comment>
<comment type="similarity">
    <text evidence="1">Belongs to the DnaJ family.</text>
</comment>
<organism>
    <name type="scientific">Chlamydia pneumoniae</name>
    <name type="common">Chlamydophila pneumoniae</name>
    <dbReference type="NCBI Taxonomy" id="83558"/>
    <lineage>
        <taxon>Bacteria</taxon>
        <taxon>Pseudomonadati</taxon>
        <taxon>Chlamydiota</taxon>
        <taxon>Chlamydiia</taxon>
        <taxon>Chlamydiales</taxon>
        <taxon>Chlamydiaceae</taxon>
        <taxon>Chlamydia/Chlamydophila group</taxon>
        <taxon>Chlamydia</taxon>
    </lineage>
</organism>
<dbReference type="EMBL" id="AE001363">
    <property type="protein sequence ID" value="AAD18185.1"/>
    <property type="molecule type" value="Genomic_DNA"/>
</dbReference>
<dbReference type="EMBL" id="AE002161">
    <property type="protein sequence ID" value="AAF38549.1"/>
    <property type="molecule type" value="Genomic_DNA"/>
</dbReference>
<dbReference type="EMBL" id="BA000008">
    <property type="protein sequence ID" value="BAA98244.1"/>
    <property type="molecule type" value="Genomic_DNA"/>
</dbReference>
<dbReference type="EMBL" id="AE009440">
    <property type="protein sequence ID" value="AAP97969.1"/>
    <property type="molecule type" value="Genomic_DNA"/>
</dbReference>
<dbReference type="PIR" id="B86495">
    <property type="entry name" value="B86495"/>
</dbReference>
<dbReference type="PIR" id="G72128">
    <property type="entry name" value="G72128"/>
</dbReference>
<dbReference type="RefSeq" id="NP_224240.1">
    <property type="nucleotide sequence ID" value="NC_000922.1"/>
</dbReference>
<dbReference type="RefSeq" id="WP_010882682.1">
    <property type="nucleotide sequence ID" value="NZ_LN847257.1"/>
</dbReference>
<dbReference type="SMR" id="Q9Z9E9"/>
<dbReference type="STRING" id="406984.CPK_ORF00535"/>
<dbReference type="GeneID" id="45050079"/>
<dbReference type="KEGG" id="cpa:CP_0744"/>
<dbReference type="KEGG" id="cpj:dnaJ"/>
<dbReference type="KEGG" id="cpn:CPn_0032"/>
<dbReference type="KEGG" id="cpt:CpB0036"/>
<dbReference type="PATRIC" id="fig|115713.3.peg.39"/>
<dbReference type="eggNOG" id="COG0484">
    <property type="taxonomic scope" value="Bacteria"/>
</dbReference>
<dbReference type="HOGENOM" id="CLU_017633_0_7_0"/>
<dbReference type="OrthoDB" id="9779889at2"/>
<dbReference type="Proteomes" id="UP000000583">
    <property type="component" value="Chromosome"/>
</dbReference>
<dbReference type="Proteomes" id="UP000000801">
    <property type="component" value="Chromosome"/>
</dbReference>
<dbReference type="GO" id="GO:0005737">
    <property type="term" value="C:cytoplasm"/>
    <property type="evidence" value="ECO:0007669"/>
    <property type="project" value="UniProtKB-SubCell"/>
</dbReference>
<dbReference type="GO" id="GO:0005524">
    <property type="term" value="F:ATP binding"/>
    <property type="evidence" value="ECO:0007669"/>
    <property type="project" value="InterPro"/>
</dbReference>
<dbReference type="GO" id="GO:0031072">
    <property type="term" value="F:heat shock protein binding"/>
    <property type="evidence" value="ECO:0007669"/>
    <property type="project" value="InterPro"/>
</dbReference>
<dbReference type="GO" id="GO:0051082">
    <property type="term" value="F:unfolded protein binding"/>
    <property type="evidence" value="ECO:0007669"/>
    <property type="project" value="UniProtKB-UniRule"/>
</dbReference>
<dbReference type="GO" id="GO:0008270">
    <property type="term" value="F:zinc ion binding"/>
    <property type="evidence" value="ECO:0007669"/>
    <property type="project" value="UniProtKB-UniRule"/>
</dbReference>
<dbReference type="GO" id="GO:0051085">
    <property type="term" value="P:chaperone cofactor-dependent protein refolding"/>
    <property type="evidence" value="ECO:0007669"/>
    <property type="project" value="TreeGrafter"/>
</dbReference>
<dbReference type="GO" id="GO:0006260">
    <property type="term" value="P:DNA replication"/>
    <property type="evidence" value="ECO:0007669"/>
    <property type="project" value="UniProtKB-KW"/>
</dbReference>
<dbReference type="GO" id="GO:0042026">
    <property type="term" value="P:protein refolding"/>
    <property type="evidence" value="ECO:0007669"/>
    <property type="project" value="TreeGrafter"/>
</dbReference>
<dbReference type="GO" id="GO:0009408">
    <property type="term" value="P:response to heat"/>
    <property type="evidence" value="ECO:0007669"/>
    <property type="project" value="InterPro"/>
</dbReference>
<dbReference type="CDD" id="cd06257">
    <property type="entry name" value="DnaJ"/>
    <property type="match status" value="1"/>
</dbReference>
<dbReference type="CDD" id="cd10747">
    <property type="entry name" value="DnaJ_C"/>
    <property type="match status" value="1"/>
</dbReference>
<dbReference type="CDD" id="cd10719">
    <property type="entry name" value="DnaJ_zf"/>
    <property type="match status" value="1"/>
</dbReference>
<dbReference type="FunFam" id="1.10.287.110:FF:000034">
    <property type="entry name" value="Chaperone protein DnaJ"/>
    <property type="match status" value="1"/>
</dbReference>
<dbReference type="FunFam" id="2.60.260.20:FF:000005">
    <property type="entry name" value="Chaperone protein dnaJ 1, mitochondrial"/>
    <property type="match status" value="1"/>
</dbReference>
<dbReference type="FunFam" id="2.10.230.10:FF:000002">
    <property type="entry name" value="Molecular chaperone DnaJ"/>
    <property type="match status" value="1"/>
</dbReference>
<dbReference type="Gene3D" id="1.10.287.110">
    <property type="entry name" value="DnaJ domain"/>
    <property type="match status" value="1"/>
</dbReference>
<dbReference type="Gene3D" id="2.10.230.10">
    <property type="entry name" value="Heat shock protein DnaJ, cysteine-rich domain"/>
    <property type="match status" value="1"/>
</dbReference>
<dbReference type="Gene3D" id="2.60.260.20">
    <property type="entry name" value="Urease metallochaperone UreE, N-terminal domain"/>
    <property type="match status" value="2"/>
</dbReference>
<dbReference type="HAMAP" id="MF_01152">
    <property type="entry name" value="DnaJ"/>
    <property type="match status" value="1"/>
</dbReference>
<dbReference type="InterPro" id="IPR012724">
    <property type="entry name" value="DnaJ"/>
</dbReference>
<dbReference type="InterPro" id="IPR002939">
    <property type="entry name" value="DnaJ_C"/>
</dbReference>
<dbReference type="InterPro" id="IPR001623">
    <property type="entry name" value="DnaJ_domain"/>
</dbReference>
<dbReference type="InterPro" id="IPR018253">
    <property type="entry name" value="DnaJ_domain_CS"/>
</dbReference>
<dbReference type="InterPro" id="IPR008971">
    <property type="entry name" value="HSP40/DnaJ_pept-bd"/>
</dbReference>
<dbReference type="InterPro" id="IPR001305">
    <property type="entry name" value="HSP_DnaJ_Cys-rich_dom"/>
</dbReference>
<dbReference type="InterPro" id="IPR036410">
    <property type="entry name" value="HSP_DnaJ_Cys-rich_dom_sf"/>
</dbReference>
<dbReference type="InterPro" id="IPR036869">
    <property type="entry name" value="J_dom_sf"/>
</dbReference>
<dbReference type="NCBIfam" id="TIGR02349">
    <property type="entry name" value="DnaJ_bact"/>
    <property type="match status" value="1"/>
</dbReference>
<dbReference type="NCBIfam" id="NF008035">
    <property type="entry name" value="PRK10767.1"/>
    <property type="match status" value="1"/>
</dbReference>
<dbReference type="NCBIfam" id="NF010877">
    <property type="entry name" value="PRK14284.1"/>
    <property type="match status" value="1"/>
</dbReference>
<dbReference type="PANTHER" id="PTHR43096:SF48">
    <property type="entry name" value="CHAPERONE PROTEIN DNAJ"/>
    <property type="match status" value="1"/>
</dbReference>
<dbReference type="PANTHER" id="PTHR43096">
    <property type="entry name" value="DNAJ HOMOLOG 1, MITOCHONDRIAL-RELATED"/>
    <property type="match status" value="1"/>
</dbReference>
<dbReference type="Pfam" id="PF00226">
    <property type="entry name" value="DnaJ"/>
    <property type="match status" value="1"/>
</dbReference>
<dbReference type="Pfam" id="PF01556">
    <property type="entry name" value="DnaJ_C"/>
    <property type="match status" value="1"/>
</dbReference>
<dbReference type="Pfam" id="PF00684">
    <property type="entry name" value="DnaJ_CXXCXGXG"/>
    <property type="match status" value="1"/>
</dbReference>
<dbReference type="PRINTS" id="PR00625">
    <property type="entry name" value="JDOMAIN"/>
</dbReference>
<dbReference type="SMART" id="SM00271">
    <property type="entry name" value="DnaJ"/>
    <property type="match status" value="1"/>
</dbReference>
<dbReference type="SUPFAM" id="SSF46565">
    <property type="entry name" value="Chaperone J-domain"/>
    <property type="match status" value="1"/>
</dbReference>
<dbReference type="SUPFAM" id="SSF57938">
    <property type="entry name" value="DnaJ/Hsp40 cysteine-rich domain"/>
    <property type="match status" value="1"/>
</dbReference>
<dbReference type="SUPFAM" id="SSF49493">
    <property type="entry name" value="HSP40/DnaJ peptide-binding domain"/>
    <property type="match status" value="2"/>
</dbReference>
<dbReference type="PROSITE" id="PS00636">
    <property type="entry name" value="DNAJ_1"/>
    <property type="match status" value="1"/>
</dbReference>
<dbReference type="PROSITE" id="PS50076">
    <property type="entry name" value="DNAJ_2"/>
    <property type="match status" value="1"/>
</dbReference>
<dbReference type="PROSITE" id="PS51188">
    <property type="entry name" value="ZF_CR"/>
    <property type="match status" value="1"/>
</dbReference>
<feature type="chain" id="PRO_0000070758" description="Chaperone protein DnaJ">
    <location>
        <begin position="1"/>
        <end position="392"/>
    </location>
</feature>
<feature type="domain" description="J" evidence="1">
    <location>
        <begin position="2"/>
        <end position="67"/>
    </location>
</feature>
<feature type="repeat" description="CXXCXGXG motif">
    <location>
        <begin position="161"/>
        <end position="168"/>
    </location>
</feature>
<feature type="repeat" description="CXXCXGXG motif">
    <location>
        <begin position="178"/>
        <end position="185"/>
    </location>
</feature>
<feature type="repeat" description="CXXCXGXG motif">
    <location>
        <begin position="200"/>
        <end position="207"/>
    </location>
</feature>
<feature type="repeat" description="CXXCXGXG motif">
    <location>
        <begin position="214"/>
        <end position="221"/>
    </location>
</feature>
<feature type="zinc finger region" description="CR-type" evidence="1">
    <location>
        <begin position="148"/>
        <end position="226"/>
    </location>
</feature>
<feature type="binding site" evidence="1">
    <location>
        <position position="161"/>
    </location>
    <ligand>
        <name>Zn(2+)</name>
        <dbReference type="ChEBI" id="CHEBI:29105"/>
        <label>1</label>
    </ligand>
</feature>
<feature type="binding site" evidence="1">
    <location>
        <position position="164"/>
    </location>
    <ligand>
        <name>Zn(2+)</name>
        <dbReference type="ChEBI" id="CHEBI:29105"/>
        <label>1</label>
    </ligand>
</feature>
<feature type="binding site" evidence="1">
    <location>
        <position position="178"/>
    </location>
    <ligand>
        <name>Zn(2+)</name>
        <dbReference type="ChEBI" id="CHEBI:29105"/>
        <label>2</label>
    </ligand>
</feature>
<feature type="binding site" evidence="1">
    <location>
        <position position="181"/>
    </location>
    <ligand>
        <name>Zn(2+)</name>
        <dbReference type="ChEBI" id="CHEBI:29105"/>
        <label>2</label>
    </ligand>
</feature>
<feature type="binding site" evidence="1">
    <location>
        <position position="200"/>
    </location>
    <ligand>
        <name>Zn(2+)</name>
        <dbReference type="ChEBI" id="CHEBI:29105"/>
        <label>2</label>
    </ligand>
</feature>
<feature type="binding site" evidence="1">
    <location>
        <position position="203"/>
    </location>
    <ligand>
        <name>Zn(2+)</name>
        <dbReference type="ChEBI" id="CHEBI:29105"/>
        <label>2</label>
    </ligand>
</feature>
<feature type="binding site" evidence="1">
    <location>
        <position position="214"/>
    </location>
    <ligand>
        <name>Zn(2+)</name>
        <dbReference type="ChEBI" id="CHEBI:29105"/>
        <label>1</label>
    </ligand>
</feature>
<feature type="binding site" evidence="1">
    <location>
        <position position="217"/>
    </location>
    <ligand>
        <name>Zn(2+)</name>
        <dbReference type="ChEBI" id="CHEBI:29105"/>
        <label>1</label>
    </ligand>
</feature>
<proteinExistence type="inferred from homology"/>